<organism>
    <name type="scientific">Yersinia pestis bv. Antiqua (strain Angola)</name>
    <dbReference type="NCBI Taxonomy" id="349746"/>
    <lineage>
        <taxon>Bacteria</taxon>
        <taxon>Pseudomonadati</taxon>
        <taxon>Pseudomonadota</taxon>
        <taxon>Gammaproteobacteria</taxon>
        <taxon>Enterobacterales</taxon>
        <taxon>Yersiniaceae</taxon>
        <taxon>Yersinia</taxon>
    </lineage>
</organism>
<evidence type="ECO:0000255" key="1">
    <source>
        <dbReference type="HAMAP-Rule" id="MF_01064"/>
    </source>
</evidence>
<protein>
    <recommendedName>
        <fullName evidence="1">UPF0253 protein YpAngola_A3414</fullName>
    </recommendedName>
</protein>
<proteinExistence type="inferred from homology"/>
<gene>
    <name type="ordered locus">YpAngola_A3414</name>
</gene>
<sequence length="66" mass="7228">MQQYCELVRRFYAEIGSGDLGYVPDALRCVLKALDEVAANDALPSSVREQAAYAAANLLVSDYVDE</sequence>
<name>Y3414_YERPG</name>
<reference key="1">
    <citation type="journal article" date="2010" name="J. Bacteriol.">
        <title>Genome sequence of the deep-rooted Yersinia pestis strain Angola reveals new insights into the evolution and pangenome of the plague bacterium.</title>
        <authorList>
            <person name="Eppinger M."/>
            <person name="Worsham P.L."/>
            <person name="Nikolich M.P."/>
            <person name="Riley D.R."/>
            <person name="Sebastian Y."/>
            <person name="Mou S."/>
            <person name="Achtman M."/>
            <person name="Lindler L.E."/>
            <person name="Ravel J."/>
        </authorList>
    </citation>
    <scope>NUCLEOTIDE SEQUENCE [LARGE SCALE GENOMIC DNA]</scope>
    <source>
        <strain>Angola</strain>
    </source>
</reference>
<feature type="chain" id="PRO_1000136549" description="UPF0253 protein YpAngola_A3414">
    <location>
        <begin position="1"/>
        <end position="66"/>
    </location>
</feature>
<comment type="similarity">
    <text evidence="1">Belongs to the UPF0253 family.</text>
</comment>
<accession>A9R375</accession>
<dbReference type="EMBL" id="CP000901">
    <property type="protein sequence ID" value="ABX87038.1"/>
    <property type="molecule type" value="Genomic_DNA"/>
</dbReference>
<dbReference type="RefSeq" id="WP_002212152.1">
    <property type="nucleotide sequence ID" value="NZ_CP009935.1"/>
</dbReference>
<dbReference type="SMR" id="A9R375"/>
<dbReference type="KEGG" id="ypg:YpAngola_A3414"/>
<dbReference type="PATRIC" id="fig|349746.12.peg.109"/>
<dbReference type="HAMAP" id="MF_01064">
    <property type="entry name" value="UPF0253"/>
    <property type="match status" value="1"/>
</dbReference>
<dbReference type="InterPro" id="IPR009624">
    <property type="entry name" value="UPF0253"/>
</dbReference>
<dbReference type="NCBIfam" id="NF003436">
    <property type="entry name" value="PRK04964.1"/>
    <property type="match status" value="1"/>
</dbReference>
<dbReference type="Pfam" id="PF06786">
    <property type="entry name" value="UPF0253"/>
    <property type="match status" value="1"/>
</dbReference>